<gene>
    <name evidence="1" type="primary">rplK</name>
    <name type="ordered locus">STER_1798</name>
</gene>
<name>RL11_STRTD</name>
<proteinExistence type="inferred from homology"/>
<dbReference type="EMBL" id="CP000419">
    <property type="protein sequence ID" value="ABJ66929.1"/>
    <property type="molecule type" value="Genomic_DNA"/>
</dbReference>
<dbReference type="RefSeq" id="WP_002953535.1">
    <property type="nucleotide sequence ID" value="NZ_CP086001.1"/>
</dbReference>
<dbReference type="SMR" id="Q03IP3"/>
<dbReference type="GeneID" id="66899554"/>
<dbReference type="KEGG" id="ste:STER_1798"/>
<dbReference type="HOGENOM" id="CLU_074237_2_1_9"/>
<dbReference type="GO" id="GO:0022625">
    <property type="term" value="C:cytosolic large ribosomal subunit"/>
    <property type="evidence" value="ECO:0007669"/>
    <property type="project" value="TreeGrafter"/>
</dbReference>
<dbReference type="GO" id="GO:0070180">
    <property type="term" value="F:large ribosomal subunit rRNA binding"/>
    <property type="evidence" value="ECO:0007669"/>
    <property type="project" value="UniProtKB-UniRule"/>
</dbReference>
<dbReference type="GO" id="GO:0003735">
    <property type="term" value="F:structural constituent of ribosome"/>
    <property type="evidence" value="ECO:0007669"/>
    <property type="project" value="InterPro"/>
</dbReference>
<dbReference type="GO" id="GO:0006412">
    <property type="term" value="P:translation"/>
    <property type="evidence" value="ECO:0007669"/>
    <property type="project" value="UniProtKB-UniRule"/>
</dbReference>
<dbReference type="CDD" id="cd00349">
    <property type="entry name" value="Ribosomal_L11"/>
    <property type="match status" value="1"/>
</dbReference>
<dbReference type="FunFam" id="1.10.10.250:FF:000001">
    <property type="entry name" value="50S ribosomal protein L11"/>
    <property type="match status" value="1"/>
</dbReference>
<dbReference type="FunFam" id="3.30.1550.10:FF:000001">
    <property type="entry name" value="50S ribosomal protein L11"/>
    <property type="match status" value="1"/>
</dbReference>
<dbReference type="Gene3D" id="1.10.10.250">
    <property type="entry name" value="Ribosomal protein L11, C-terminal domain"/>
    <property type="match status" value="1"/>
</dbReference>
<dbReference type="Gene3D" id="3.30.1550.10">
    <property type="entry name" value="Ribosomal protein L11/L12, N-terminal domain"/>
    <property type="match status" value="1"/>
</dbReference>
<dbReference type="HAMAP" id="MF_00736">
    <property type="entry name" value="Ribosomal_uL11"/>
    <property type="match status" value="1"/>
</dbReference>
<dbReference type="InterPro" id="IPR000911">
    <property type="entry name" value="Ribosomal_uL11"/>
</dbReference>
<dbReference type="InterPro" id="IPR006519">
    <property type="entry name" value="Ribosomal_uL11_bac-typ"/>
</dbReference>
<dbReference type="InterPro" id="IPR020783">
    <property type="entry name" value="Ribosomal_uL11_C"/>
</dbReference>
<dbReference type="InterPro" id="IPR036769">
    <property type="entry name" value="Ribosomal_uL11_C_sf"/>
</dbReference>
<dbReference type="InterPro" id="IPR020785">
    <property type="entry name" value="Ribosomal_uL11_CS"/>
</dbReference>
<dbReference type="InterPro" id="IPR020784">
    <property type="entry name" value="Ribosomal_uL11_N"/>
</dbReference>
<dbReference type="InterPro" id="IPR036796">
    <property type="entry name" value="Ribosomal_uL11_N_sf"/>
</dbReference>
<dbReference type="NCBIfam" id="TIGR01632">
    <property type="entry name" value="L11_bact"/>
    <property type="match status" value="1"/>
</dbReference>
<dbReference type="PANTHER" id="PTHR11661">
    <property type="entry name" value="60S RIBOSOMAL PROTEIN L12"/>
    <property type="match status" value="1"/>
</dbReference>
<dbReference type="PANTHER" id="PTHR11661:SF1">
    <property type="entry name" value="LARGE RIBOSOMAL SUBUNIT PROTEIN UL11M"/>
    <property type="match status" value="1"/>
</dbReference>
<dbReference type="Pfam" id="PF00298">
    <property type="entry name" value="Ribosomal_L11"/>
    <property type="match status" value="1"/>
</dbReference>
<dbReference type="Pfam" id="PF03946">
    <property type="entry name" value="Ribosomal_L11_N"/>
    <property type="match status" value="1"/>
</dbReference>
<dbReference type="SMART" id="SM00649">
    <property type="entry name" value="RL11"/>
    <property type="match status" value="1"/>
</dbReference>
<dbReference type="SUPFAM" id="SSF54747">
    <property type="entry name" value="Ribosomal L11/L12e N-terminal domain"/>
    <property type="match status" value="1"/>
</dbReference>
<dbReference type="SUPFAM" id="SSF46906">
    <property type="entry name" value="Ribosomal protein L11, C-terminal domain"/>
    <property type="match status" value="1"/>
</dbReference>
<dbReference type="PROSITE" id="PS00359">
    <property type="entry name" value="RIBOSOMAL_L11"/>
    <property type="match status" value="1"/>
</dbReference>
<reference key="1">
    <citation type="journal article" date="2006" name="Proc. Natl. Acad. Sci. U.S.A.">
        <title>Comparative genomics of the lactic acid bacteria.</title>
        <authorList>
            <person name="Makarova K.S."/>
            <person name="Slesarev A."/>
            <person name="Wolf Y.I."/>
            <person name="Sorokin A."/>
            <person name="Mirkin B."/>
            <person name="Koonin E.V."/>
            <person name="Pavlov A."/>
            <person name="Pavlova N."/>
            <person name="Karamychev V."/>
            <person name="Polouchine N."/>
            <person name="Shakhova V."/>
            <person name="Grigoriev I."/>
            <person name="Lou Y."/>
            <person name="Rohksar D."/>
            <person name="Lucas S."/>
            <person name="Huang K."/>
            <person name="Goodstein D.M."/>
            <person name="Hawkins T."/>
            <person name="Plengvidhya V."/>
            <person name="Welker D."/>
            <person name="Hughes J."/>
            <person name="Goh Y."/>
            <person name="Benson A."/>
            <person name="Baldwin K."/>
            <person name="Lee J.-H."/>
            <person name="Diaz-Muniz I."/>
            <person name="Dosti B."/>
            <person name="Smeianov V."/>
            <person name="Wechter W."/>
            <person name="Barabote R."/>
            <person name="Lorca G."/>
            <person name="Altermann E."/>
            <person name="Barrangou R."/>
            <person name="Ganesan B."/>
            <person name="Xie Y."/>
            <person name="Rawsthorne H."/>
            <person name="Tamir D."/>
            <person name="Parker C."/>
            <person name="Breidt F."/>
            <person name="Broadbent J.R."/>
            <person name="Hutkins R."/>
            <person name="O'Sullivan D."/>
            <person name="Steele J."/>
            <person name="Unlu G."/>
            <person name="Saier M.H. Jr."/>
            <person name="Klaenhammer T."/>
            <person name="Richardson P."/>
            <person name="Kozyavkin S."/>
            <person name="Weimer B.C."/>
            <person name="Mills D.A."/>
        </authorList>
    </citation>
    <scope>NUCLEOTIDE SEQUENCE [LARGE SCALE GENOMIC DNA]</scope>
    <source>
        <strain>ATCC BAA-491 / LMD-9</strain>
    </source>
</reference>
<sequence length="141" mass="14801">MAKKVENIVKLQIPAGKATPAPPVGPALGQAGINIMGFTKEFNARTADQAGMIIPVVISVYEDKSFDFITKTPPAAVLLKKAAGVEKGSGTPNSVKVASVTRAQVREIAETKMPDLNAANIESAMRMIEGTARSMGFTVTD</sequence>
<comment type="function">
    <text evidence="1">Forms part of the ribosomal stalk which helps the ribosome interact with GTP-bound translation factors.</text>
</comment>
<comment type="subunit">
    <text evidence="1">Part of the ribosomal stalk of the 50S ribosomal subunit. Interacts with L10 and the large rRNA to form the base of the stalk. L10 forms an elongated spine to which L12 dimers bind in a sequential fashion forming a multimeric L10(L12)X complex.</text>
</comment>
<comment type="PTM">
    <text evidence="1">One or more lysine residues are methylated.</text>
</comment>
<comment type="similarity">
    <text evidence="1">Belongs to the universal ribosomal protein uL11 family.</text>
</comment>
<protein>
    <recommendedName>
        <fullName evidence="1">Large ribosomal subunit protein uL11</fullName>
    </recommendedName>
    <alternativeName>
        <fullName evidence="2">50S ribosomal protein L11</fullName>
    </alternativeName>
</protein>
<organism>
    <name type="scientific">Streptococcus thermophilus (strain ATCC BAA-491 / LMD-9)</name>
    <dbReference type="NCBI Taxonomy" id="322159"/>
    <lineage>
        <taxon>Bacteria</taxon>
        <taxon>Bacillati</taxon>
        <taxon>Bacillota</taxon>
        <taxon>Bacilli</taxon>
        <taxon>Lactobacillales</taxon>
        <taxon>Streptococcaceae</taxon>
        <taxon>Streptococcus</taxon>
    </lineage>
</organism>
<accession>Q03IP3</accession>
<feature type="chain" id="PRO_1000046279" description="Large ribosomal subunit protein uL11">
    <location>
        <begin position="1"/>
        <end position="141"/>
    </location>
</feature>
<evidence type="ECO:0000255" key="1">
    <source>
        <dbReference type="HAMAP-Rule" id="MF_00736"/>
    </source>
</evidence>
<evidence type="ECO:0000305" key="2"/>
<keyword id="KW-0488">Methylation</keyword>
<keyword id="KW-0687">Ribonucleoprotein</keyword>
<keyword id="KW-0689">Ribosomal protein</keyword>
<keyword id="KW-0694">RNA-binding</keyword>
<keyword id="KW-0699">rRNA-binding</keyword>